<name>FLA2_ARATH</name>
<organism>
    <name type="scientific">Arabidopsis thaliana</name>
    <name type="common">Mouse-ear cress</name>
    <dbReference type="NCBI Taxonomy" id="3702"/>
    <lineage>
        <taxon>Eukaryota</taxon>
        <taxon>Viridiplantae</taxon>
        <taxon>Streptophyta</taxon>
        <taxon>Embryophyta</taxon>
        <taxon>Tracheophyta</taxon>
        <taxon>Spermatophyta</taxon>
        <taxon>Magnoliopsida</taxon>
        <taxon>eudicotyledons</taxon>
        <taxon>Gunneridae</taxon>
        <taxon>Pentapetalae</taxon>
        <taxon>rosids</taxon>
        <taxon>malvids</taxon>
        <taxon>Brassicales</taxon>
        <taxon>Brassicaceae</taxon>
        <taxon>Camelineae</taxon>
        <taxon>Arabidopsis</taxon>
    </lineage>
</organism>
<keyword id="KW-1003">Cell membrane</keyword>
<keyword id="KW-0325">Glycoprotein</keyword>
<keyword id="KW-0336">GPI-anchor</keyword>
<keyword id="KW-0449">Lipoprotein</keyword>
<keyword id="KW-0472">Membrane</keyword>
<keyword id="KW-0654">Proteoglycan</keyword>
<keyword id="KW-1185">Reference proteome</keyword>
<keyword id="KW-0677">Repeat</keyword>
<keyword id="KW-0732">Signal</keyword>
<comment type="function">
    <text>May be a cell surface adhesion protein.</text>
</comment>
<comment type="subcellular location">
    <subcellularLocation>
        <location evidence="5">Cell membrane</location>
        <topology evidence="5">Lipid-anchor</topology>
        <topology evidence="5">GPI-anchor</topology>
    </subcellularLocation>
</comment>
<comment type="tissue specificity">
    <text evidence="4">Expressed mainly in flowers and to a lesser extent in leaves and roots.</text>
</comment>
<comment type="induction">
    <text evidence="4">Down-regulated by abscisic acid (ABA).</text>
</comment>
<comment type="similarity">
    <text evidence="5">Belongs to the fasciclin-like AGP family.</text>
</comment>
<feature type="signal peptide" evidence="1">
    <location>
        <begin position="1"/>
        <end position="26"/>
    </location>
</feature>
<feature type="chain" id="PRO_0000251257" description="Fasciclin-like arabinogalactan protein 2">
    <location>
        <begin position="27"/>
        <end position="378"/>
    </location>
</feature>
<feature type="propeptide" id="PRO_0000251258" description="Removed in mature form" evidence="1">
    <location>
        <begin position="379"/>
        <end position="403"/>
    </location>
</feature>
<feature type="domain" description="FAS1 1" evidence="2">
    <location>
        <begin position="27"/>
        <end position="174"/>
    </location>
</feature>
<feature type="domain" description="FAS1 2" evidence="2">
    <location>
        <begin position="187"/>
        <end position="326"/>
    </location>
</feature>
<feature type="region of interest" description="Disordered" evidence="3">
    <location>
        <begin position="338"/>
        <end position="371"/>
    </location>
</feature>
<feature type="lipid moiety-binding region" description="GPI-anchor amidated alanine" evidence="1">
    <location>
        <position position="378"/>
    </location>
</feature>
<feature type="glycosylation site" description="N-linked (GlcNAc...) asparagine" evidence="1">
    <location>
        <position position="28"/>
    </location>
</feature>
<feature type="glycosylation site" description="N-linked (GlcNAc...) asparagine" evidence="1">
    <location>
        <position position="130"/>
    </location>
</feature>
<feature type="glycosylation site" description="N-linked (GlcNAc...) asparagine" evidence="1">
    <location>
        <position position="164"/>
    </location>
</feature>
<feature type="glycosylation site" description="N-linked (GlcNAc...) asparagine" evidence="1">
    <location>
        <position position="248"/>
    </location>
</feature>
<feature type="sequence conflict" description="In Ref. 1; AAK20858 and 6; AAM65777." evidence="5" ref="1 6">
    <original>L</original>
    <variation>F</variation>
    <location>
        <position position="4"/>
    </location>
</feature>
<feature type="sequence conflict" description="In Ref. 6; AAM65777." evidence="5" ref="6">
    <original>V</original>
    <variation>G</variation>
    <location>
        <position position="369"/>
    </location>
</feature>
<feature type="sequence conflict" description="In Ref. 1; AAK20858 and 6; AAM65777." evidence="5" ref="1 6">
    <original>N</original>
    <variation>S</variation>
    <location>
        <position position="388"/>
    </location>
</feature>
<protein>
    <recommendedName>
        <fullName>Fasciclin-like arabinogalactan protein 2</fullName>
    </recommendedName>
</protein>
<dbReference type="EMBL" id="AF333971">
    <property type="protein sequence ID" value="AAK20858.1"/>
    <property type="molecule type" value="mRNA"/>
</dbReference>
<dbReference type="EMBL" id="AL049640">
    <property type="protein sequence ID" value="CAB40990.1"/>
    <property type="molecule type" value="Genomic_DNA"/>
</dbReference>
<dbReference type="EMBL" id="AL161534">
    <property type="protein sequence ID" value="CAB78315.1"/>
    <property type="molecule type" value="Genomic_DNA"/>
</dbReference>
<dbReference type="EMBL" id="CP002687">
    <property type="protein sequence ID" value="AEE83171.1"/>
    <property type="molecule type" value="Genomic_DNA"/>
</dbReference>
<dbReference type="EMBL" id="AY142065">
    <property type="protein sequence ID" value="AAM98329.1"/>
    <property type="molecule type" value="mRNA"/>
</dbReference>
<dbReference type="EMBL" id="AY060582">
    <property type="protein sequence ID" value="AAL31207.1"/>
    <property type="molecule type" value="mRNA"/>
</dbReference>
<dbReference type="EMBL" id="AK230362">
    <property type="protein sequence ID" value="BAF02161.1"/>
    <property type="molecule type" value="mRNA"/>
</dbReference>
<dbReference type="EMBL" id="AY088236">
    <property type="protein sequence ID" value="AAM65777.1"/>
    <property type="molecule type" value="mRNA"/>
</dbReference>
<dbReference type="PIR" id="T06631">
    <property type="entry name" value="T06631"/>
</dbReference>
<dbReference type="RefSeq" id="NP_193009.1">
    <property type="nucleotide sequence ID" value="NM_117342.3"/>
</dbReference>
<dbReference type="SMR" id="Q9SU13"/>
<dbReference type="BioGRID" id="12182">
    <property type="interactions" value="7"/>
</dbReference>
<dbReference type="FunCoup" id="Q9SU13">
    <property type="interactions" value="24"/>
</dbReference>
<dbReference type="IntAct" id="Q9SU13">
    <property type="interactions" value="4"/>
</dbReference>
<dbReference type="STRING" id="3702.Q9SU13"/>
<dbReference type="GlyCosmos" id="Q9SU13">
    <property type="glycosylation" value="4 sites, No reported glycans"/>
</dbReference>
<dbReference type="GlyGen" id="Q9SU13">
    <property type="glycosylation" value="5 sites"/>
</dbReference>
<dbReference type="PaxDb" id="3702-AT4G12730.1"/>
<dbReference type="ProteomicsDB" id="230838"/>
<dbReference type="EnsemblPlants" id="AT4G12730.1">
    <property type="protein sequence ID" value="AT4G12730.1"/>
    <property type="gene ID" value="AT4G12730"/>
</dbReference>
<dbReference type="GeneID" id="826885"/>
<dbReference type="Gramene" id="AT4G12730.1">
    <property type="protein sequence ID" value="AT4G12730.1"/>
    <property type="gene ID" value="AT4G12730"/>
</dbReference>
<dbReference type="KEGG" id="ath:AT4G12730"/>
<dbReference type="Araport" id="AT4G12730"/>
<dbReference type="TAIR" id="AT4G12730">
    <property type="gene designation" value="FLA2"/>
</dbReference>
<dbReference type="eggNOG" id="ENOG502QR33">
    <property type="taxonomic scope" value="Eukaryota"/>
</dbReference>
<dbReference type="HOGENOM" id="CLU_036139_0_1_1"/>
<dbReference type="InParanoid" id="Q9SU13"/>
<dbReference type="OMA" id="SSMYQAT"/>
<dbReference type="PhylomeDB" id="Q9SU13"/>
<dbReference type="PRO" id="PR:Q9SU13"/>
<dbReference type="Proteomes" id="UP000006548">
    <property type="component" value="Chromosome 4"/>
</dbReference>
<dbReference type="ExpressionAtlas" id="Q9SU13">
    <property type="expression patterns" value="baseline and differential"/>
</dbReference>
<dbReference type="GO" id="GO:0005829">
    <property type="term" value="C:cytosol"/>
    <property type="evidence" value="ECO:0007005"/>
    <property type="project" value="TAIR"/>
</dbReference>
<dbReference type="GO" id="GO:0000325">
    <property type="term" value="C:plant-type vacuole"/>
    <property type="evidence" value="ECO:0007005"/>
    <property type="project" value="TAIR"/>
</dbReference>
<dbReference type="GO" id="GO:0005886">
    <property type="term" value="C:plasma membrane"/>
    <property type="evidence" value="ECO:0007005"/>
    <property type="project" value="TAIR"/>
</dbReference>
<dbReference type="GO" id="GO:0098552">
    <property type="term" value="C:side of membrane"/>
    <property type="evidence" value="ECO:0007669"/>
    <property type="project" value="UniProtKB-KW"/>
</dbReference>
<dbReference type="FunFam" id="2.30.180.10:FF:000008">
    <property type="entry name" value="Fasciclin-like arabinogalactan protein 10"/>
    <property type="match status" value="1"/>
</dbReference>
<dbReference type="FunFam" id="2.30.180.10:FF:000010">
    <property type="entry name" value="Fasciclin-like arabinogalactan protein 2"/>
    <property type="match status" value="1"/>
</dbReference>
<dbReference type="Gene3D" id="2.30.180.10">
    <property type="entry name" value="FAS1 domain"/>
    <property type="match status" value="2"/>
</dbReference>
<dbReference type="InterPro" id="IPR036378">
    <property type="entry name" value="FAS1_dom_sf"/>
</dbReference>
<dbReference type="InterPro" id="IPR000782">
    <property type="entry name" value="FAS1_domain"/>
</dbReference>
<dbReference type="InterPro" id="IPR033254">
    <property type="entry name" value="Plant_FLA"/>
</dbReference>
<dbReference type="PANTHER" id="PTHR32382">
    <property type="entry name" value="FASCICLIN-LIKE ARABINOGALACTAN PROTEIN"/>
    <property type="match status" value="1"/>
</dbReference>
<dbReference type="PANTHER" id="PTHR32382:SF64">
    <property type="entry name" value="FASCICLIN-LIKE ARABINOGALACTAN PROTEIN 2"/>
    <property type="match status" value="1"/>
</dbReference>
<dbReference type="Pfam" id="PF02469">
    <property type="entry name" value="Fasciclin"/>
    <property type="match status" value="2"/>
</dbReference>
<dbReference type="SMART" id="SM00554">
    <property type="entry name" value="FAS1"/>
    <property type="match status" value="2"/>
</dbReference>
<dbReference type="SUPFAM" id="SSF82153">
    <property type="entry name" value="FAS1 domain"/>
    <property type="match status" value="2"/>
</dbReference>
<dbReference type="PROSITE" id="PS50213">
    <property type="entry name" value="FAS1"/>
    <property type="match status" value="2"/>
</dbReference>
<accession>Q9SU13</accession>
<accession>Q8L9T2</accession>
<accession>Q9C5Q6</accession>
<reference key="1">
    <citation type="journal article" date="2001" name="Plant Mol. Biol.">
        <title>The complex structures of arabinogalactan-proteins and the journey towards understanding function.</title>
        <authorList>
            <person name="Gaspar Y."/>
            <person name="Johnson K.L."/>
            <person name="McKenna J.A."/>
            <person name="Bacic A."/>
            <person name="Schultz C.J."/>
        </authorList>
    </citation>
    <scope>NUCLEOTIDE SEQUENCE [MRNA]</scope>
</reference>
<reference key="2">
    <citation type="journal article" date="1999" name="Nature">
        <title>Sequence and analysis of chromosome 4 of the plant Arabidopsis thaliana.</title>
        <authorList>
            <person name="Mayer K.F.X."/>
            <person name="Schueller C."/>
            <person name="Wambutt R."/>
            <person name="Murphy G."/>
            <person name="Volckaert G."/>
            <person name="Pohl T."/>
            <person name="Duesterhoeft A."/>
            <person name="Stiekema W."/>
            <person name="Entian K.-D."/>
            <person name="Terryn N."/>
            <person name="Harris B."/>
            <person name="Ansorge W."/>
            <person name="Brandt P."/>
            <person name="Grivell L.A."/>
            <person name="Rieger M."/>
            <person name="Weichselgartner M."/>
            <person name="de Simone V."/>
            <person name="Obermaier B."/>
            <person name="Mache R."/>
            <person name="Mueller M."/>
            <person name="Kreis M."/>
            <person name="Delseny M."/>
            <person name="Puigdomenech P."/>
            <person name="Watson M."/>
            <person name="Schmidtheini T."/>
            <person name="Reichert B."/>
            <person name="Portetelle D."/>
            <person name="Perez-Alonso M."/>
            <person name="Boutry M."/>
            <person name="Bancroft I."/>
            <person name="Vos P."/>
            <person name="Hoheisel J."/>
            <person name="Zimmermann W."/>
            <person name="Wedler H."/>
            <person name="Ridley P."/>
            <person name="Langham S.-A."/>
            <person name="McCullagh B."/>
            <person name="Bilham L."/>
            <person name="Robben J."/>
            <person name="van der Schueren J."/>
            <person name="Grymonprez B."/>
            <person name="Chuang Y.-J."/>
            <person name="Vandenbussche F."/>
            <person name="Braeken M."/>
            <person name="Weltjens I."/>
            <person name="Voet M."/>
            <person name="Bastiaens I."/>
            <person name="Aert R."/>
            <person name="Defoor E."/>
            <person name="Weitzenegger T."/>
            <person name="Bothe G."/>
            <person name="Ramsperger U."/>
            <person name="Hilbert H."/>
            <person name="Braun M."/>
            <person name="Holzer E."/>
            <person name="Brandt A."/>
            <person name="Peters S."/>
            <person name="van Staveren M."/>
            <person name="Dirkse W."/>
            <person name="Mooijman P."/>
            <person name="Klein Lankhorst R."/>
            <person name="Rose M."/>
            <person name="Hauf J."/>
            <person name="Koetter P."/>
            <person name="Berneiser S."/>
            <person name="Hempel S."/>
            <person name="Feldpausch M."/>
            <person name="Lamberth S."/>
            <person name="Van den Daele H."/>
            <person name="De Keyser A."/>
            <person name="Buysshaert C."/>
            <person name="Gielen J."/>
            <person name="Villarroel R."/>
            <person name="De Clercq R."/>
            <person name="van Montagu M."/>
            <person name="Rogers J."/>
            <person name="Cronin A."/>
            <person name="Quail M.A."/>
            <person name="Bray-Allen S."/>
            <person name="Clark L."/>
            <person name="Doggett J."/>
            <person name="Hall S."/>
            <person name="Kay M."/>
            <person name="Lennard N."/>
            <person name="McLay K."/>
            <person name="Mayes R."/>
            <person name="Pettett A."/>
            <person name="Rajandream M.A."/>
            <person name="Lyne M."/>
            <person name="Benes V."/>
            <person name="Rechmann S."/>
            <person name="Borkova D."/>
            <person name="Bloecker H."/>
            <person name="Scharfe M."/>
            <person name="Grimm M."/>
            <person name="Loehnert T.-H."/>
            <person name="Dose S."/>
            <person name="de Haan M."/>
            <person name="Maarse A.C."/>
            <person name="Schaefer M."/>
            <person name="Mueller-Auer S."/>
            <person name="Gabel C."/>
            <person name="Fuchs M."/>
            <person name="Fartmann B."/>
            <person name="Granderath K."/>
            <person name="Dauner D."/>
            <person name="Herzl A."/>
            <person name="Neumann S."/>
            <person name="Argiriou A."/>
            <person name="Vitale D."/>
            <person name="Liguori R."/>
            <person name="Piravandi E."/>
            <person name="Massenet O."/>
            <person name="Quigley F."/>
            <person name="Clabauld G."/>
            <person name="Muendlein A."/>
            <person name="Felber R."/>
            <person name="Schnabl S."/>
            <person name="Hiller R."/>
            <person name="Schmidt W."/>
            <person name="Lecharny A."/>
            <person name="Aubourg S."/>
            <person name="Chefdor F."/>
            <person name="Cooke R."/>
            <person name="Berger C."/>
            <person name="Monfort A."/>
            <person name="Casacuberta E."/>
            <person name="Gibbons T."/>
            <person name="Weber N."/>
            <person name="Vandenbol M."/>
            <person name="Bargues M."/>
            <person name="Terol J."/>
            <person name="Torres A."/>
            <person name="Perez-Perez A."/>
            <person name="Purnelle B."/>
            <person name="Bent E."/>
            <person name="Johnson S."/>
            <person name="Tacon D."/>
            <person name="Jesse T."/>
            <person name="Heijnen L."/>
            <person name="Schwarz S."/>
            <person name="Scholler P."/>
            <person name="Heber S."/>
            <person name="Francs P."/>
            <person name="Bielke C."/>
            <person name="Frishman D."/>
            <person name="Haase D."/>
            <person name="Lemcke K."/>
            <person name="Mewes H.-W."/>
            <person name="Stocker S."/>
            <person name="Zaccaria P."/>
            <person name="Bevan M."/>
            <person name="Wilson R.K."/>
            <person name="de la Bastide M."/>
            <person name="Habermann K."/>
            <person name="Parnell L."/>
            <person name="Dedhia N."/>
            <person name="Gnoj L."/>
            <person name="Schutz K."/>
            <person name="Huang E."/>
            <person name="Spiegel L."/>
            <person name="Sekhon M."/>
            <person name="Murray J."/>
            <person name="Sheet P."/>
            <person name="Cordes M."/>
            <person name="Abu-Threideh J."/>
            <person name="Stoneking T."/>
            <person name="Kalicki J."/>
            <person name="Graves T."/>
            <person name="Harmon G."/>
            <person name="Edwards J."/>
            <person name="Latreille P."/>
            <person name="Courtney L."/>
            <person name="Cloud J."/>
            <person name="Abbott A."/>
            <person name="Scott K."/>
            <person name="Johnson D."/>
            <person name="Minx P."/>
            <person name="Bentley D."/>
            <person name="Fulton B."/>
            <person name="Miller N."/>
            <person name="Greco T."/>
            <person name="Kemp K."/>
            <person name="Kramer J."/>
            <person name="Fulton L."/>
            <person name="Mardis E."/>
            <person name="Dante M."/>
            <person name="Pepin K."/>
            <person name="Hillier L.W."/>
            <person name="Nelson J."/>
            <person name="Spieth J."/>
            <person name="Ryan E."/>
            <person name="Andrews S."/>
            <person name="Geisel C."/>
            <person name="Layman D."/>
            <person name="Du H."/>
            <person name="Ali J."/>
            <person name="Berghoff A."/>
            <person name="Jones K."/>
            <person name="Drone K."/>
            <person name="Cotton M."/>
            <person name="Joshu C."/>
            <person name="Antonoiu B."/>
            <person name="Zidanic M."/>
            <person name="Strong C."/>
            <person name="Sun H."/>
            <person name="Lamar B."/>
            <person name="Yordan C."/>
            <person name="Ma P."/>
            <person name="Zhong J."/>
            <person name="Preston R."/>
            <person name="Vil D."/>
            <person name="Shekher M."/>
            <person name="Matero A."/>
            <person name="Shah R."/>
            <person name="Swaby I.K."/>
            <person name="O'Shaughnessy A."/>
            <person name="Rodriguez M."/>
            <person name="Hoffman J."/>
            <person name="Till S."/>
            <person name="Granat S."/>
            <person name="Shohdy N."/>
            <person name="Hasegawa A."/>
            <person name="Hameed A."/>
            <person name="Lodhi M."/>
            <person name="Johnson A."/>
            <person name="Chen E."/>
            <person name="Marra M.A."/>
            <person name="Martienssen R."/>
            <person name="McCombie W.R."/>
        </authorList>
    </citation>
    <scope>NUCLEOTIDE SEQUENCE [LARGE SCALE GENOMIC DNA]</scope>
    <source>
        <strain>cv. Columbia</strain>
    </source>
</reference>
<reference key="3">
    <citation type="journal article" date="2017" name="Plant J.">
        <title>Araport11: a complete reannotation of the Arabidopsis thaliana reference genome.</title>
        <authorList>
            <person name="Cheng C.Y."/>
            <person name="Krishnakumar V."/>
            <person name="Chan A.P."/>
            <person name="Thibaud-Nissen F."/>
            <person name="Schobel S."/>
            <person name="Town C.D."/>
        </authorList>
    </citation>
    <scope>GENOME REANNOTATION</scope>
    <source>
        <strain>cv. Columbia</strain>
    </source>
</reference>
<reference key="4">
    <citation type="journal article" date="2003" name="Science">
        <title>Empirical analysis of transcriptional activity in the Arabidopsis genome.</title>
        <authorList>
            <person name="Yamada K."/>
            <person name="Lim J."/>
            <person name="Dale J.M."/>
            <person name="Chen H."/>
            <person name="Shinn P."/>
            <person name="Palm C.J."/>
            <person name="Southwick A.M."/>
            <person name="Wu H.C."/>
            <person name="Kim C.J."/>
            <person name="Nguyen M."/>
            <person name="Pham P.K."/>
            <person name="Cheuk R.F."/>
            <person name="Karlin-Newmann G."/>
            <person name="Liu S.X."/>
            <person name="Lam B."/>
            <person name="Sakano H."/>
            <person name="Wu T."/>
            <person name="Yu G."/>
            <person name="Miranda M."/>
            <person name="Quach H.L."/>
            <person name="Tripp M."/>
            <person name="Chang C.H."/>
            <person name="Lee J.M."/>
            <person name="Toriumi M.J."/>
            <person name="Chan M.M."/>
            <person name="Tang C.C."/>
            <person name="Onodera C.S."/>
            <person name="Deng J.M."/>
            <person name="Akiyama K."/>
            <person name="Ansari Y."/>
            <person name="Arakawa T."/>
            <person name="Banh J."/>
            <person name="Banno F."/>
            <person name="Bowser L."/>
            <person name="Brooks S.Y."/>
            <person name="Carninci P."/>
            <person name="Chao Q."/>
            <person name="Choy N."/>
            <person name="Enju A."/>
            <person name="Goldsmith A.D."/>
            <person name="Gurjal M."/>
            <person name="Hansen N.F."/>
            <person name="Hayashizaki Y."/>
            <person name="Johnson-Hopson C."/>
            <person name="Hsuan V.W."/>
            <person name="Iida K."/>
            <person name="Karnes M."/>
            <person name="Khan S."/>
            <person name="Koesema E."/>
            <person name="Ishida J."/>
            <person name="Jiang P.X."/>
            <person name="Jones T."/>
            <person name="Kawai J."/>
            <person name="Kamiya A."/>
            <person name="Meyers C."/>
            <person name="Nakajima M."/>
            <person name="Narusaka M."/>
            <person name="Seki M."/>
            <person name="Sakurai T."/>
            <person name="Satou M."/>
            <person name="Tamse R."/>
            <person name="Vaysberg M."/>
            <person name="Wallender E.K."/>
            <person name="Wong C."/>
            <person name="Yamamura Y."/>
            <person name="Yuan S."/>
            <person name="Shinozaki K."/>
            <person name="Davis R.W."/>
            <person name="Theologis A."/>
            <person name="Ecker J.R."/>
        </authorList>
    </citation>
    <scope>NUCLEOTIDE SEQUENCE [LARGE SCALE MRNA]</scope>
    <source>
        <strain>cv. Columbia</strain>
    </source>
</reference>
<reference key="5">
    <citation type="submission" date="2006-07" db="EMBL/GenBank/DDBJ databases">
        <title>Large-scale analysis of RIKEN Arabidopsis full-length (RAFL) cDNAs.</title>
        <authorList>
            <person name="Totoki Y."/>
            <person name="Seki M."/>
            <person name="Ishida J."/>
            <person name="Nakajima M."/>
            <person name="Enju A."/>
            <person name="Kamiya A."/>
            <person name="Narusaka M."/>
            <person name="Shin-i T."/>
            <person name="Nakagawa M."/>
            <person name="Sakamoto N."/>
            <person name="Oishi K."/>
            <person name="Kohara Y."/>
            <person name="Kobayashi M."/>
            <person name="Toyoda A."/>
            <person name="Sakaki Y."/>
            <person name="Sakurai T."/>
            <person name="Iida K."/>
            <person name="Akiyama K."/>
            <person name="Satou M."/>
            <person name="Toyoda T."/>
            <person name="Konagaya A."/>
            <person name="Carninci P."/>
            <person name="Kawai J."/>
            <person name="Hayashizaki Y."/>
            <person name="Shinozaki K."/>
        </authorList>
    </citation>
    <scope>NUCLEOTIDE SEQUENCE [LARGE SCALE MRNA]</scope>
    <source>
        <strain>cv. Columbia</strain>
    </source>
</reference>
<reference key="6">
    <citation type="submission" date="2002-03" db="EMBL/GenBank/DDBJ databases">
        <title>Full-length cDNA from Arabidopsis thaliana.</title>
        <authorList>
            <person name="Brover V.V."/>
            <person name="Troukhan M.E."/>
            <person name="Alexandrov N.A."/>
            <person name="Lu Y.-P."/>
            <person name="Flavell R.B."/>
            <person name="Feldmann K.A."/>
        </authorList>
    </citation>
    <scope>NUCLEOTIDE SEQUENCE [LARGE SCALE MRNA]</scope>
</reference>
<reference key="7">
    <citation type="journal article" date="2003" name="Plant Physiol.">
        <title>The fasciclin-like arabinogalactan proteins of Arabidopsis. A multigene family of putative cell adhesion molecules.</title>
        <authorList>
            <person name="Johnson K.L."/>
            <person name="Jones B.J."/>
            <person name="Bacic A."/>
            <person name="Schultz C.J."/>
        </authorList>
    </citation>
    <scope>GENE FAMILY ORGANIZATION</scope>
    <scope>NOMENCLATURE</scope>
    <scope>TISSUE SPECIFICITY</scope>
    <scope>INDUCTION</scope>
</reference>
<evidence type="ECO:0000255" key="1"/>
<evidence type="ECO:0000255" key="2">
    <source>
        <dbReference type="PROSITE-ProRule" id="PRU00082"/>
    </source>
</evidence>
<evidence type="ECO:0000256" key="3">
    <source>
        <dbReference type="SAM" id="MobiDB-lite"/>
    </source>
</evidence>
<evidence type="ECO:0000269" key="4">
    <source>
    </source>
</evidence>
<evidence type="ECO:0000305" key="5"/>
<gene>
    <name type="primary">FLA2</name>
    <name type="ordered locus">At4g12730</name>
    <name type="ORF">T20K18.80</name>
</gene>
<proteinExistence type="evidence at transcript level"/>
<sequence>MAYLRRAATALVLIFQLHLFLSLSNAHNITRILAKDPDFSTFNHYLSATHLADEINRRQTITVLAVDNSAMSSILSNGYSLYQIRNILSLHVLVDYFGTKKLHQITDGSTSTASMFQSTGSATGTSGYINITDIKGGKVAFGVQDDDSKLTAHYVKSVFEKPYNISVLHISQVLTSPEAEAPTASPSDLILTTILEKQGCKAFSDILKSTGADKTFQDTVDGGLTVFCPSDSAVGKFMPKFKSLSPANKTALVLYHGMPVYQSLQMLRSGNGAVNTLATEGNNKFDFTVQNDGEDVTLETDVVTAKVMGTLKDQEPLIVYKIDKVLLPREIYKAVKTSAPAPKSSKKKPKNAEADADGPSADAPSDDDVEVADDKNGAVSAMITRTSNVVTAIVGLCFGVWLM</sequence>